<evidence type="ECO:0000255" key="1">
    <source>
        <dbReference type="HAMAP-Rule" id="MF_00184"/>
    </source>
</evidence>
<evidence type="ECO:0000255" key="2">
    <source>
        <dbReference type="PROSITE-ProRule" id="PRU01228"/>
    </source>
</evidence>
<reference key="1">
    <citation type="journal article" date="2007" name="PLoS Genet.">
        <title>A tale of two oxidation states: bacterial colonization of arsenic-rich environments.</title>
        <authorList>
            <person name="Muller D."/>
            <person name="Medigue C."/>
            <person name="Koechler S."/>
            <person name="Barbe V."/>
            <person name="Barakat M."/>
            <person name="Talla E."/>
            <person name="Bonnefoy V."/>
            <person name="Krin E."/>
            <person name="Arsene-Ploetze F."/>
            <person name="Carapito C."/>
            <person name="Chandler M."/>
            <person name="Cournoyer B."/>
            <person name="Cruveiller S."/>
            <person name="Dossat C."/>
            <person name="Duval S."/>
            <person name="Heymann M."/>
            <person name="Leize E."/>
            <person name="Lieutaud A."/>
            <person name="Lievremont D."/>
            <person name="Makita Y."/>
            <person name="Mangenot S."/>
            <person name="Nitschke W."/>
            <person name="Ortet P."/>
            <person name="Perdrial N."/>
            <person name="Schoepp B."/>
            <person name="Siguier P."/>
            <person name="Simeonova D.D."/>
            <person name="Rouy Z."/>
            <person name="Segurens B."/>
            <person name="Turlin E."/>
            <person name="Vallenet D."/>
            <person name="van Dorsselaer A."/>
            <person name="Weiss S."/>
            <person name="Weissenbach J."/>
            <person name="Lett M.-C."/>
            <person name="Danchin A."/>
            <person name="Bertin P.N."/>
        </authorList>
    </citation>
    <scope>NUCLEOTIDE SEQUENCE [LARGE SCALE GENOMIC DNA]</scope>
    <source>
        <strain>ULPAs1</strain>
    </source>
</reference>
<organism>
    <name type="scientific">Herminiimonas arsenicoxydans</name>
    <dbReference type="NCBI Taxonomy" id="204773"/>
    <lineage>
        <taxon>Bacteria</taxon>
        <taxon>Pseudomonadati</taxon>
        <taxon>Pseudomonadota</taxon>
        <taxon>Betaproteobacteria</taxon>
        <taxon>Burkholderiales</taxon>
        <taxon>Oxalobacteraceae</taxon>
        <taxon>Herminiimonas</taxon>
    </lineage>
</organism>
<name>SYT_HERAR</name>
<dbReference type="EC" id="6.1.1.3" evidence="1"/>
<dbReference type="EMBL" id="CU207211">
    <property type="protein sequence ID" value="CAL61956.1"/>
    <property type="molecule type" value="Genomic_DNA"/>
</dbReference>
<dbReference type="SMR" id="A4G619"/>
<dbReference type="STRING" id="204773.HEAR1801"/>
<dbReference type="KEGG" id="har:HEAR1801"/>
<dbReference type="eggNOG" id="COG0441">
    <property type="taxonomic scope" value="Bacteria"/>
</dbReference>
<dbReference type="HOGENOM" id="CLU_008554_0_1_4"/>
<dbReference type="OrthoDB" id="9802304at2"/>
<dbReference type="Proteomes" id="UP000006697">
    <property type="component" value="Chromosome"/>
</dbReference>
<dbReference type="GO" id="GO:0005737">
    <property type="term" value="C:cytoplasm"/>
    <property type="evidence" value="ECO:0007669"/>
    <property type="project" value="UniProtKB-SubCell"/>
</dbReference>
<dbReference type="GO" id="GO:0005524">
    <property type="term" value="F:ATP binding"/>
    <property type="evidence" value="ECO:0007669"/>
    <property type="project" value="UniProtKB-UniRule"/>
</dbReference>
<dbReference type="GO" id="GO:0046872">
    <property type="term" value="F:metal ion binding"/>
    <property type="evidence" value="ECO:0007669"/>
    <property type="project" value="UniProtKB-KW"/>
</dbReference>
<dbReference type="GO" id="GO:0004829">
    <property type="term" value="F:threonine-tRNA ligase activity"/>
    <property type="evidence" value="ECO:0007669"/>
    <property type="project" value="UniProtKB-UniRule"/>
</dbReference>
<dbReference type="GO" id="GO:0000049">
    <property type="term" value="F:tRNA binding"/>
    <property type="evidence" value="ECO:0007669"/>
    <property type="project" value="UniProtKB-KW"/>
</dbReference>
<dbReference type="GO" id="GO:0006435">
    <property type="term" value="P:threonyl-tRNA aminoacylation"/>
    <property type="evidence" value="ECO:0007669"/>
    <property type="project" value="UniProtKB-UniRule"/>
</dbReference>
<dbReference type="CDD" id="cd01667">
    <property type="entry name" value="TGS_ThrRS"/>
    <property type="match status" value="1"/>
</dbReference>
<dbReference type="CDD" id="cd00860">
    <property type="entry name" value="ThrRS_anticodon"/>
    <property type="match status" value="1"/>
</dbReference>
<dbReference type="CDD" id="cd00771">
    <property type="entry name" value="ThrRS_core"/>
    <property type="match status" value="1"/>
</dbReference>
<dbReference type="FunFam" id="3.10.20.30:FF:000005">
    <property type="entry name" value="Threonine--tRNA ligase"/>
    <property type="match status" value="1"/>
</dbReference>
<dbReference type="FunFam" id="3.30.54.20:FF:000002">
    <property type="entry name" value="Threonine--tRNA ligase"/>
    <property type="match status" value="1"/>
</dbReference>
<dbReference type="FunFam" id="3.30.930.10:FF:000002">
    <property type="entry name" value="Threonine--tRNA ligase"/>
    <property type="match status" value="1"/>
</dbReference>
<dbReference type="FunFam" id="3.40.50.800:FF:000001">
    <property type="entry name" value="Threonine--tRNA ligase"/>
    <property type="match status" value="1"/>
</dbReference>
<dbReference type="FunFam" id="3.30.980.10:FF:000005">
    <property type="entry name" value="Threonyl-tRNA synthetase, mitochondrial"/>
    <property type="match status" value="1"/>
</dbReference>
<dbReference type="Gene3D" id="3.10.20.30">
    <property type="match status" value="1"/>
</dbReference>
<dbReference type="Gene3D" id="3.30.54.20">
    <property type="match status" value="1"/>
</dbReference>
<dbReference type="Gene3D" id="3.40.50.800">
    <property type="entry name" value="Anticodon-binding domain"/>
    <property type="match status" value="1"/>
</dbReference>
<dbReference type="Gene3D" id="3.30.930.10">
    <property type="entry name" value="Bira Bifunctional Protein, Domain 2"/>
    <property type="match status" value="1"/>
</dbReference>
<dbReference type="Gene3D" id="3.30.980.10">
    <property type="entry name" value="Threonyl-trna Synthetase, Chain A, domain 2"/>
    <property type="match status" value="1"/>
</dbReference>
<dbReference type="HAMAP" id="MF_00184">
    <property type="entry name" value="Thr_tRNA_synth"/>
    <property type="match status" value="1"/>
</dbReference>
<dbReference type="InterPro" id="IPR002314">
    <property type="entry name" value="aa-tRNA-synt_IIb"/>
</dbReference>
<dbReference type="InterPro" id="IPR006195">
    <property type="entry name" value="aa-tRNA-synth_II"/>
</dbReference>
<dbReference type="InterPro" id="IPR045864">
    <property type="entry name" value="aa-tRNA-synth_II/BPL/LPL"/>
</dbReference>
<dbReference type="InterPro" id="IPR004154">
    <property type="entry name" value="Anticodon-bd"/>
</dbReference>
<dbReference type="InterPro" id="IPR036621">
    <property type="entry name" value="Anticodon-bd_dom_sf"/>
</dbReference>
<dbReference type="InterPro" id="IPR012675">
    <property type="entry name" value="Beta-grasp_dom_sf"/>
</dbReference>
<dbReference type="InterPro" id="IPR004095">
    <property type="entry name" value="TGS"/>
</dbReference>
<dbReference type="InterPro" id="IPR012676">
    <property type="entry name" value="TGS-like"/>
</dbReference>
<dbReference type="InterPro" id="IPR002320">
    <property type="entry name" value="Thr-tRNA-ligase_IIa"/>
</dbReference>
<dbReference type="InterPro" id="IPR018163">
    <property type="entry name" value="Thr/Ala-tRNA-synth_IIc_edit"/>
</dbReference>
<dbReference type="InterPro" id="IPR047246">
    <property type="entry name" value="ThrRS_anticodon"/>
</dbReference>
<dbReference type="InterPro" id="IPR033728">
    <property type="entry name" value="ThrRS_core"/>
</dbReference>
<dbReference type="InterPro" id="IPR012947">
    <property type="entry name" value="tRNA_SAD"/>
</dbReference>
<dbReference type="NCBIfam" id="TIGR00418">
    <property type="entry name" value="thrS"/>
    <property type="match status" value="1"/>
</dbReference>
<dbReference type="PANTHER" id="PTHR11451:SF44">
    <property type="entry name" value="THREONINE--TRNA LIGASE, CHLOROPLASTIC_MITOCHONDRIAL 2"/>
    <property type="match status" value="1"/>
</dbReference>
<dbReference type="PANTHER" id="PTHR11451">
    <property type="entry name" value="THREONINE-TRNA LIGASE"/>
    <property type="match status" value="1"/>
</dbReference>
<dbReference type="Pfam" id="PF03129">
    <property type="entry name" value="HGTP_anticodon"/>
    <property type="match status" value="1"/>
</dbReference>
<dbReference type="Pfam" id="PF02824">
    <property type="entry name" value="TGS"/>
    <property type="match status" value="1"/>
</dbReference>
<dbReference type="Pfam" id="PF00587">
    <property type="entry name" value="tRNA-synt_2b"/>
    <property type="match status" value="1"/>
</dbReference>
<dbReference type="Pfam" id="PF07973">
    <property type="entry name" value="tRNA_SAD"/>
    <property type="match status" value="1"/>
</dbReference>
<dbReference type="PRINTS" id="PR01047">
    <property type="entry name" value="TRNASYNTHTHR"/>
</dbReference>
<dbReference type="SMART" id="SM00863">
    <property type="entry name" value="tRNA_SAD"/>
    <property type="match status" value="1"/>
</dbReference>
<dbReference type="SUPFAM" id="SSF52954">
    <property type="entry name" value="Class II aaRS ABD-related"/>
    <property type="match status" value="1"/>
</dbReference>
<dbReference type="SUPFAM" id="SSF55681">
    <property type="entry name" value="Class II aaRS and biotin synthetases"/>
    <property type="match status" value="1"/>
</dbReference>
<dbReference type="SUPFAM" id="SSF81271">
    <property type="entry name" value="TGS-like"/>
    <property type="match status" value="1"/>
</dbReference>
<dbReference type="SUPFAM" id="SSF55186">
    <property type="entry name" value="ThrRS/AlaRS common domain"/>
    <property type="match status" value="1"/>
</dbReference>
<dbReference type="PROSITE" id="PS50862">
    <property type="entry name" value="AA_TRNA_LIGASE_II"/>
    <property type="match status" value="1"/>
</dbReference>
<dbReference type="PROSITE" id="PS51880">
    <property type="entry name" value="TGS"/>
    <property type="match status" value="1"/>
</dbReference>
<gene>
    <name evidence="1" type="primary">thrS</name>
    <name type="ordered locus">HEAR1801</name>
</gene>
<feature type="chain" id="PRO_1000020406" description="Threonine--tRNA ligase">
    <location>
        <begin position="1"/>
        <end position="635"/>
    </location>
</feature>
<feature type="domain" description="TGS" evidence="2">
    <location>
        <begin position="1"/>
        <end position="61"/>
    </location>
</feature>
<feature type="region of interest" description="Catalytic" evidence="1">
    <location>
        <begin position="242"/>
        <end position="533"/>
    </location>
</feature>
<feature type="binding site" evidence="1">
    <location>
        <position position="333"/>
    </location>
    <ligand>
        <name>Zn(2+)</name>
        <dbReference type="ChEBI" id="CHEBI:29105"/>
    </ligand>
</feature>
<feature type="binding site" evidence="1">
    <location>
        <position position="384"/>
    </location>
    <ligand>
        <name>Zn(2+)</name>
        <dbReference type="ChEBI" id="CHEBI:29105"/>
    </ligand>
</feature>
<feature type="binding site" evidence="1">
    <location>
        <position position="510"/>
    </location>
    <ligand>
        <name>Zn(2+)</name>
        <dbReference type="ChEBI" id="CHEBI:29105"/>
    </ligand>
</feature>
<comment type="function">
    <text evidence="1">Catalyzes the attachment of threonine to tRNA(Thr) in a two-step reaction: L-threonine is first activated by ATP to form Thr-AMP and then transferred to the acceptor end of tRNA(Thr). Also edits incorrectly charged L-seryl-tRNA(Thr).</text>
</comment>
<comment type="catalytic activity">
    <reaction evidence="1">
        <text>tRNA(Thr) + L-threonine + ATP = L-threonyl-tRNA(Thr) + AMP + diphosphate + H(+)</text>
        <dbReference type="Rhea" id="RHEA:24624"/>
        <dbReference type="Rhea" id="RHEA-COMP:9670"/>
        <dbReference type="Rhea" id="RHEA-COMP:9704"/>
        <dbReference type="ChEBI" id="CHEBI:15378"/>
        <dbReference type="ChEBI" id="CHEBI:30616"/>
        <dbReference type="ChEBI" id="CHEBI:33019"/>
        <dbReference type="ChEBI" id="CHEBI:57926"/>
        <dbReference type="ChEBI" id="CHEBI:78442"/>
        <dbReference type="ChEBI" id="CHEBI:78534"/>
        <dbReference type="ChEBI" id="CHEBI:456215"/>
        <dbReference type="EC" id="6.1.1.3"/>
    </reaction>
</comment>
<comment type="cofactor">
    <cofactor evidence="1">
        <name>Zn(2+)</name>
        <dbReference type="ChEBI" id="CHEBI:29105"/>
    </cofactor>
    <text evidence="1">Binds 1 zinc ion per subunit.</text>
</comment>
<comment type="subunit">
    <text evidence="1">Homodimer.</text>
</comment>
<comment type="subcellular location">
    <subcellularLocation>
        <location evidence="1">Cytoplasm</location>
    </subcellularLocation>
</comment>
<comment type="similarity">
    <text evidence="1">Belongs to the class-II aminoacyl-tRNA synthetase family.</text>
</comment>
<accession>A4G619</accession>
<keyword id="KW-0030">Aminoacyl-tRNA synthetase</keyword>
<keyword id="KW-0067">ATP-binding</keyword>
<keyword id="KW-0963">Cytoplasm</keyword>
<keyword id="KW-0436">Ligase</keyword>
<keyword id="KW-0479">Metal-binding</keyword>
<keyword id="KW-0547">Nucleotide-binding</keyword>
<keyword id="KW-0648">Protein biosynthesis</keyword>
<keyword id="KW-1185">Reference proteome</keyword>
<keyword id="KW-0694">RNA-binding</keyword>
<keyword id="KW-0820">tRNA-binding</keyword>
<keyword id="KW-0862">Zinc</keyword>
<sequence>MITVRLPDGSQREFDTPVTVAQVAANIGAGLAKAALAGKVNGNVVDTSYLIEQDSDLSIITDKDAEGLDVIRHSTAHLLAYAVKELFPDAQVTIGPVIENGFYYDFSYKRPFTPEDLLAIEKKMAELAKKDEPVTRQVLPRDVAVEYFKSIGEAYKAEIIASIPADQDVSLYTEGKFTDLCRGPHVPSTGKLKVFKLMKLAGAYWRGDSKNEMLQRIYGTAWAKKEEQEAYLTMLEEAEKRDHRKLGRALDLFHFQEEAPGLIFWHPKGWTVWQQVEQYMRRVYQDNGYQEVKAPQILDRSLWEKSGHWENYKENMFTTESENRSYALKPMNCPGHVQIFASDLRSYRELPLRYGEFGQCHRNEPSGSLHGMMRVRGFTQDDGHIFCTEDQILDECVAFTALLQKVYRDFGFTNVIYKVATRPEKRVGSDEAWDKAEAALIASLDRSGCTYEISPGEGAFYGPKIEYTLKDAIGRMWQCGTIQVDFSMPARLGAEYVAEDNTKKIPVMLHRAILGSFERFIGMLIENHAGALPLWLAPVQIAVLNISDAQADYAQAVAQNLKKQGFRVHVDLRNEKITYKIREHSIQKLPYIIVIGDKERDAGTVAVRARGNVDLGVMPVDLLVERLNNEVEAKA</sequence>
<proteinExistence type="inferred from homology"/>
<protein>
    <recommendedName>
        <fullName evidence="1">Threonine--tRNA ligase</fullName>
        <ecNumber evidence="1">6.1.1.3</ecNumber>
    </recommendedName>
    <alternativeName>
        <fullName evidence="1">Threonyl-tRNA synthetase</fullName>
        <shortName evidence="1">ThrRS</shortName>
    </alternativeName>
</protein>